<sequence length="262" mass="30303">MLDPIAIQLGPLAIRWYALCIVTGLILAVYLTMKEAPRKKIIPDDILDFILVAFPLAILGARLYYVIFRFDYYSQNLGEIFAIWNGGLAIYGGLITGALVLYIFADRKLINTWDFLDIAAPSVMIAQSLGRWGNFFNQEAYGATVDNLDYLPGFIRDQMYIEGSYRQPTFLYESLWNLLGFALILIFRRKWKSLRRGHITAFYLIWYGFGRMVIEGMRTDSLMFFSLRVSQWLSVVLIGLGIMIVIYQNRKKAPYYITEEEK</sequence>
<reference key="1">
    <citation type="journal article" date="2010" name="Genome Biol.">
        <title>Structure and dynamics of the pan-genome of Streptococcus pneumoniae and closely related species.</title>
        <authorList>
            <person name="Donati C."/>
            <person name="Hiller N.L."/>
            <person name="Tettelin H."/>
            <person name="Muzzi A."/>
            <person name="Croucher N.J."/>
            <person name="Angiuoli S.V."/>
            <person name="Oggioni M."/>
            <person name="Dunning Hotopp J.C."/>
            <person name="Hu F.Z."/>
            <person name="Riley D.R."/>
            <person name="Covacci A."/>
            <person name="Mitchell T.J."/>
            <person name="Bentley S.D."/>
            <person name="Kilian M."/>
            <person name="Ehrlich G.D."/>
            <person name="Rappuoli R."/>
            <person name="Moxon E.R."/>
            <person name="Masignani V."/>
        </authorList>
    </citation>
    <scope>NUCLEOTIDE SEQUENCE [LARGE SCALE GENOMIC DNA]</scope>
    <source>
        <strain>JJA</strain>
    </source>
</reference>
<name>LGT_STRZJ</name>
<evidence type="ECO:0000255" key="1">
    <source>
        <dbReference type="HAMAP-Rule" id="MF_01147"/>
    </source>
</evidence>
<dbReference type="EC" id="2.5.1.145" evidence="1"/>
<dbReference type="EMBL" id="CP000919">
    <property type="protein sequence ID" value="ACO18436.1"/>
    <property type="molecule type" value="Genomic_DNA"/>
</dbReference>
<dbReference type="RefSeq" id="WP_000886665.1">
    <property type="nucleotide sequence ID" value="NC_012466.1"/>
</dbReference>
<dbReference type="SMR" id="C1CF00"/>
<dbReference type="KEGG" id="sjj:SPJ_1311"/>
<dbReference type="HOGENOM" id="CLU_013386_0_1_9"/>
<dbReference type="UniPathway" id="UPA00664"/>
<dbReference type="Proteomes" id="UP000002206">
    <property type="component" value="Chromosome"/>
</dbReference>
<dbReference type="GO" id="GO:0005886">
    <property type="term" value="C:plasma membrane"/>
    <property type="evidence" value="ECO:0007669"/>
    <property type="project" value="UniProtKB-SubCell"/>
</dbReference>
<dbReference type="GO" id="GO:0008961">
    <property type="term" value="F:phosphatidylglycerol-prolipoprotein diacylglyceryl transferase activity"/>
    <property type="evidence" value="ECO:0007669"/>
    <property type="project" value="UniProtKB-UniRule"/>
</dbReference>
<dbReference type="GO" id="GO:0042158">
    <property type="term" value="P:lipoprotein biosynthetic process"/>
    <property type="evidence" value="ECO:0007669"/>
    <property type="project" value="UniProtKB-UniRule"/>
</dbReference>
<dbReference type="HAMAP" id="MF_01147">
    <property type="entry name" value="Lgt"/>
    <property type="match status" value="1"/>
</dbReference>
<dbReference type="InterPro" id="IPR001640">
    <property type="entry name" value="Lgt"/>
</dbReference>
<dbReference type="NCBIfam" id="TIGR00544">
    <property type="entry name" value="lgt"/>
    <property type="match status" value="1"/>
</dbReference>
<dbReference type="PANTHER" id="PTHR30589:SF0">
    <property type="entry name" value="PHOSPHATIDYLGLYCEROL--PROLIPOPROTEIN DIACYLGLYCERYL TRANSFERASE"/>
    <property type="match status" value="1"/>
</dbReference>
<dbReference type="PANTHER" id="PTHR30589">
    <property type="entry name" value="PROLIPOPROTEIN DIACYLGLYCERYL TRANSFERASE"/>
    <property type="match status" value="1"/>
</dbReference>
<dbReference type="Pfam" id="PF01790">
    <property type="entry name" value="LGT"/>
    <property type="match status" value="1"/>
</dbReference>
<dbReference type="PROSITE" id="PS01311">
    <property type="entry name" value="LGT"/>
    <property type="match status" value="1"/>
</dbReference>
<accession>C1CF00</accession>
<protein>
    <recommendedName>
        <fullName evidence="1">Phosphatidylglycerol--prolipoprotein diacylglyceryl transferase</fullName>
        <ecNumber evidence="1">2.5.1.145</ecNumber>
    </recommendedName>
</protein>
<feature type="chain" id="PRO_1000164153" description="Phosphatidylglycerol--prolipoprotein diacylglyceryl transferase">
    <location>
        <begin position="1"/>
        <end position="262"/>
    </location>
</feature>
<feature type="transmembrane region" description="Helical" evidence="1">
    <location>
        <begin position="9"/>
        <end position="29"/>
    </location>
</feature>
<feature type="transmembrane region" description="Helical" evidence="1">
    <location>
        <begin position="41"/>
        <end position="61"/>
    </location>
</feature>
<feature type="transmembrane region" description="Helical" evidence="1">
    <location>
        <begin position="80"/>
        <end position="100"/>
    </location>
</feature>
<feature type="transmembrane region" description="Helical" evidence="1">
    <location>
        <begin position="109"/>
        <end position="129"/>
    </location>
</feature>
<feature type="transmembrane region" description="Helical" evidence="1">
    <location>
        <begin position="167"/>
        <end position="187"/>
    </location>
</feature>
<feature type="transmembrane region" description="Helical" evidence="1">
    <location>
        <begin position="197"/>
        <end position="217"/>
    </location>
</feature>
<feature type="transmembrane region" description="Helical" evidence="1">
    <location>
        <begin position="227"/>
        <end position="247"/>
    </location>
</feature>
<feature type="binding site" evidence="1">
    <location>
        <position position="131"/>
    </location>
    <ligand>
        <name>a 1,2-diacyl-sn-glycero-3-phospho-(1'-sn-glycerol)</name>
        <dbReference type="ChEBI" id="CHEBI:64716"/>
    </ligand>
</feature>
<gene>
    <name evidence="1" type="primary">lgt</name>
    <name type="ordered locus">SPJ_1311</name>
</gene>
<keyword id="KW-1003">Cell membrane</keyword>
<keyword id="KW-0472">Membrane</keyword>
<keyword id="KW-0808">Transferase</keyword>
<keyword id="KW-0812">Transmembrane</keyword>
<keyword id="KW-1133">Transmembrane helix</keyword>
<comment type="function">
    <text evidence="1">Catalyzes the transfer of the diacylglyceryl group from phosphatidylglycerol to the sulfhydryl group of the N-terminal cysteine of a prolipoprotein, the first step in the formation of mature lipoproteins.</text>
</comment>
<comment type="catalytic activity">
    <reaction evidence="1">
        <text>L-cysteinyl-[prolipoprotein] + a 1,2-diacyl-sn-glycero-3-phospho-(1'-sn-glycerol) = an S-1,2-diacyl-sn-glyceryl-L-cysteinyl-[prolipoprotein] + sn-glycerol 1-phosphate + H(+)</text>
        <dbReference type="Rhea" id="RHEA:56712"/>
        <dbReference type="Rhea" id="RHEA-COMP:14679"/>
        <dbReference type="Rhea" id="RHEA-COMP:14680"/>
        <dbReference type="ChEBI" id="CHEBI:15378"/>
        <dbReference type="ChEBI" id="CHEBI:29950"/>
        <dbReference type="ChEBI" id="CHEBI:57685"/>
        <dbReference type="ChEBI" id="CHEBI:64716"/>
        <dbReference type="ChEBI" id="CHEBI:140658"/>
        <dbReference type="EC" id="2.5.1.145"/>
    </reaction>
</comment>
<comment type="pathway">
    <text evidence="1">Protein modification; lipoprotein biosynthesis (diacylglyceryl transfer).</text>
</comment>
<comment type="subcellular location">
    <subcellularLocation>
        <location evidence="1">Cell membrane</location>
        <topology evidence="1">Multi-pass membrane protein</topology>
    </subcellularLocation>
</comment>
<comment type="similarity">
    <text evidence="1">Belongs to the Lgt family.</text>
</comment>
<proteinExistence type="inferred from homology"/>
<organism>
    <name type="scientific">Streptococcus pneumoniae (strain JJA)</name>
    <dbReference type="NCBI Taxonomy" id="488222"/>
    <lineage>
        <taxon>Bacteria</taxon>
        <taxon>Bacillati</taxon>
        <taxon>Bacillota</taxon>
        <taxon>Bacilli</taxon>
        <taxon>Lactobacillales</taxon>
        <taxon>Streptococcaceae</taxon>
        <taxon>Streptococcus</taxon>
    </lineage>
</organism>